<sequence>MARSKTSHNWLKEHFDDKYVKMAQKDGYRSRASYKLLEIQEKDKLIRPGMTVIDLGAAPGGWSQVTSRLIGGQGRLIASDILEMDSIPDVTFIQGDFTEDAILEQILEAVGNTQVDLVISDMAPNMSGLSAVDMPRAMFLCELALDLAGRVLRPGGDFLIKVFQGEGFDVYHKDIRKLFDKVQMRKPSSSRDRSREQYLLARGFRGIDGAASIERF</sequence>
<protein>
    <recommendedName>
        <fullName evidence="1">Ribosomal RNA large subunit methyltransferase E</fullName>
        <ecNumber evidence="1">2.1.1.166</ecNumber>
    </recommendedName>
    <alternativeName>
        <fullName evidence="1">23S rRNA Um2552 methyltransferase</fullName>
    </alternativeName>
    <alternativeName>
        <fullName evidence="1">rRNA (uridine-2'-O-)-methyltransferase</fullName>
    </alternativeName>
</protein>
<feature type="chain" id="PRO_0000155524" description="Ribosomal RNA large subunit methyltransferase E">
    <location>
        <begin position="1"/>
        <end position="216"/>
    </location>
</feature>
<feature type="active site" description="Proton acceptor" evidence="1">
    <location>
        <position position="161"/>
    </location>
</feature>
<feature type="binding site" evidence="1">
    <location>
        <position position="60"/>
    </location>
    <ligand>
        <name>S-adenosyl-L-methionine</name>
        <dbReference type="ChEBI" id="CHEBI:59789"/>
    </ligand>
</feature>
<feature type="binding site" evidence="1">
    <location>
        <position position="62"/>
    </location>
    <ligand>
        <name>S-adenosyl-L-methionine</name>
        <dbReference type="ChEBI" id="CHEBI:59789"/>
    </ligand>
</feature>
<feature type="binding site" evidence="1">
    <location>
        <position position="80"/>
    </location>
    <ligand>
        <name>S-adenosyl-L-methionine</name>
        <dbReference type="ChEBI" id="CHEBI:59789"/>
    </ligand>
</feature>
<feature type="binding site" evidence="1">
    <location>
        <position position="96"/>
    </location>
    <ligand>
        <name>S-adenosyl-L-methionine</name>
        <dbReference type="ChEBI" id="CHEBI:59789"/>
    </ligand>
</feature>
<feature type="binding site" evidence="1">
    <location>
        <position position="121"/>
    </location>
    <ligand>
        <name>S-adenosyl-L-methionine</name>
        <dbReference type="ChEBI" id="CHEBI:59789"/>
    </ligand>
</feature>
<accession>Q4ZNQ4</accession>
<organism>
    <name type="scientific">Pseudomonas syringae pv. syringae (strain B728a)</name>
    <dbReference type="NCBI Taxonomy" id="205918"/>
    <lineage>
        <taxon>Bacteria</taxon>
        <taxon>Pseudomonadati</taxon>
        <taxon>Pseudomonadota</taxon>
        <taxon>Gammaproteobacteria</taxon>
        <taxon>Pseudomonadales</taxon>
        <taxon>Pseudomonadaceae</taxon>
        <taxon>Pseudomonas</taxon>
        <taxon>Pseudomonas syringae</taxon>
    </lineage>
</organism>
<keyword id="KW-0963">Cytoplasm</keyword>
<keyword id="KW-0489">Methyltransferase</keyword>
<keyword id="KW-0698">rRNA processing</keyword>
<keyword id="KW-0949">S-adenosyl-L-methionine</keyword>
<keyword id="KW-0808">Transferase</keyword>
<gene>
    <name evidence="1" type="primary">rlmE</name>
    <name evidence="1" type="synonym">ftsJ</name>
    <name evidence="1" type="synonym">rrmJ</name>
    <name type="ordered locus">Psyr_4188</name>
</gene>
<reference key="1">
    <citation type="journal article" date="2005" name="Proc. Natl. Acad. Sci. U.S.A.">
        <title>Comparison of the complete genome sequences of Pseudomonas syringae pv. syringae B728a and pv. tomato DC3000.</title>
        <authorList>
            <person name="Feil H."/>
            <person name="Feil W.S."/>
            <person name="Chain P."/>
            <person name="Larimer F."/>
            <person name="Dibartolo G."/>
            <person name="Copeland A."/>
            <person name="Lykidis A."/>
            <person name="Trong S."/>
            <person name="Nolan M."/>
            <person name="Goltsman E."/>
            <person name="Thiel J."/>
            <person name="Malfatti S."/>
            <person name="Loper J.E."/>
            <person name="Lapidus A."/>
            <person name="Detter J.C."/>
            <person name="Land M."/>
            <person name="Richardson P.M."/>
            <person name="Kyrpides N.C."/>
            <person name="Ivanova N."/>
            <person name="Lindow S.E."/>
        </authorList>
    </citation>
    <scope>NUCLEOTIDE SEQUENCE [LARGE SCALE GENOMIC DNA]</scope>
    <source>
        <strain>B728a</strain>
    </source>
</reference>
<evidence type="ECO:0000255" key="1">
    <source>
        <dbReference type="HAMAP-Rule" id="MF_01547"/>
    </source>
</evidence>
<name>RLME_PSEU2</name>
<comment type="function">
    <text evidence="1">Specifically methylates the uridine in position 2552 of 23S rRNA at the 2'-O position of the ribose in the fully assembled 50S ribosomal subunit.</text>
</comment>
<comment type="catalytic activity">
    <reaction evidence="1">
        <text>uridine(2552) in 23S rRNA + S-adenosyl-L-methionine = 2'-O-methyluridine(2552) in 23S rRNA + S-adenosyl-L-homocysteine + H(+)</text>
        <dbReference type="Rhea" id="RHEA:42720"/>
        <dbReference type="Rhea" id="RHEA-COMP:10202"/>
        <dbReference type="Rhea" id="RHEA-COMP:10203"/>
        <dbReference type="ChEBI" id="CHEBI:15378"/>
        <dbReference type="ChEBI" id="CHEBI:57856"/>
        <dbReference type="ChEBI" id="CHEBI:59789"/>
        <dbReference type="ChEBI" id="CHEBI:65315"/>
        <dbReference type="ChEBI" id="CHEBI:74478"/>
        <dbReference type="EC" id="2.1.1.166"/>
    </reaction>
</comment>
<comment type="subcellular location">
    <subcellularLocation>
        <location evidence="1">Cytoplasm</location>
    </subcellularLocation>
</comment>
<comment type="similarity">
    <text evidence="1">Belongs to the class I-like SAM-binding methyltransferase superfamily. RNA methyltransferase RlmE family.</text>
</comment>
<proteinExistence type="inferred from homology"/>
<dbReference type="EC" id="2.1.1.166" evidence="1"/>
<dbReference type="EMBL" id="CP000075">
    <property type="protein sequence ID" value="AAY39218.1"/>
    <property type="molecule type" value="Genomic_DNA"/>
</dbReference>
<dbReference type="RefSeq" id="WP_003313635.1">
    <property type="nucleotide sequence ID" value="NC_007005.1"/>
</dbReference>
<dbReference type="RefSeq" id="YP_237256.1">
    <property type="nucleotide sequence ID" value="NC_007005.1"/>
</dbReference>
<dbReference type="SMR" id="Q4ZNQ4"/>
<dbReference type="STRING" id="205918.Psyr_4188"/>
<dbReference type="GeneID" id="77280052"/>
<dbReference type="KEGG" id="psb:Psyr_4188"/>
<dbReference type="PATRIC" id="fig|205918.7.peg.4315"/>
<dbReference type="eggNOG" id="COG0293">
    <property type="taxonomic scope" value="Bacteria"/>
</dbReference>
<dbReference type="HOGENOM" id="CLU_009422_4_0_6"/>
<dbReference type="OrthoDB" id="9790080at2"/>
<dbReference type="Proteomes" id="UP000000426">
    <property type="component" value="Chromosome"/>
</dbReference>
<dbReference type="GO" id="GO:0005737">
    <property type="term" value="C:cytoplasm"/>
    <property type="evidence" value="ECO:0007669"/>
    <property type="project" value="UniProtKB-SubCell"/>
</dbReference>
<dbReference type="GO" id="GO:0008650">
    <property type="term" value="F:rRNA (uridine-2'-O-)-methyltransferase activity"/>
    <property type="evidence" value="ECO:0007669"/>
    <property type="project" value="UniProtKB-UniRule"/>
</dbReference>
<dbReference type="FunFam" id="3.40.50.150:FF:000005">
    <property type="entry name" value="Ribosomal RNA large subunit methyltransferase E"/>
    <property type="match status" value="1"/>
</dbReference>
<dbReference type="Gene3D" id="3.40.50.150">
    <property type="entry name" value="Vaccinia Virus protein VP39"/>
    <property type="match status" value="1"/>
</dbReference>
<dbReference type="HAMAP" id="MF_01547">
    <property type="entry name" value="RNA_methyltr_E"/>
    <property type="match status" value="1"/>
</dbReference>
<dbReference type="InterPro" id="IPR050082">
    <property type="entry name" value="RNA_methyltr_RlmE"/>
</dbReference>
<dbReference type="InterPro" id="IPR002877">
    <property type="entry name" value="RNA_MeTrfase_FtsJ_dom"/>
</dbReference>
<dbReference type="InterPro" id="IPR015507">
    <property type="entry name" value="rRNA-MeTfrase_E"/>
</dbReference>
<dbReference type="InterPro" id="IPR029063">
    <property type="entry name" value="SAM-dependent_MTases_sf"/>
</dbReference>
<dbReference type="NCBIfam" id="NF008390">
    <property type="entry name" value="PRK11188.1"/>
    <property type="match status" value="1"/>
</dbReference>
<dbReference type="PANTHER" id="PTHR10920">
    <property type="entry name" value="RIBOSOMAL RNA METHYLTRANSFERASE"/>
    <property type="match status" value="1"/>
</dbReference>
<dbReference type="PANTHER" id="PTHR10920:SF18">
    <property type="entry name" value="RRNA METHYLTRANSFERASE 2, MITOCHONDRIAL"/>
    <property type="match status" value="1"/>
</dbReference>
<dbReference type="Pfam" id="PF01728">
    <property type="entry name" value="FtsJ"/>
    <property type="match status" value="1"/>
</dbReference>
<dbReference type="PIRSF" id="PIRSF005461">
    <property type="entry name" value="23S_rRNA_mtase"/>
    <property type="match status" value="1"/>
</dbReference>
<dbReference type="SUPFAM" id="SSF53335">
    <property type="entry name" value="S-adenosyl-L-methionine-dependent methyltransferases"/>
    <property type="match status" value="1"/>
</dbReference>